<proteinExistence type="inferred from homology"/>
<protein>
    <recommendedName>
        <fullName evidence="1">Ribosomal RNA large subunit methyltransferase E</fullName>
        <ecNumber evidence="1">2.1.1.166</ecNumber>
    </recommendedName>
    <alternativeName>
        <fullName evidence="1">23S rRNA Um2552 methyltransferase</fullName>
    </alternativeName>
    <alternativeName>
        <fullName evidence="1">rRNA (uridine-2'-O-)-methyltransferase</fullName>
    </alternativeName>
</protein>
<gene>
    <name evidence="1" type="primary">rlmE</name>
    <name evidence="1" type="synonym">ftsJ</name>
    <name evidence="1" type="synonym">rrmJ</name>
    <name type="ordered locus">Bcen_0815</name>
</gene>
<feature type="chain" id="PRO_0000282732" description="Ribosomal RNA large subunit methyltransferase E">
    <location>
        <begin position="1"/>
        <end position="220"/>
    </location>
</feature>
<feature type="region of interest" description="Disordered" evidence="2">
    <location>
        <begin position="198"/>
        <end position="220"/>
    </location>
</feature>
<feature type="active site" description="Proton acceptor" evidence="1">
    <location>
        <position position="173"/>
    </location>
</feature>
<feature type="binding site" evidence="1">
    <location>
        <position position="60"/>
    </location>
    <ligand>
        <name>S-adenosyl-L-methionine</name>
        <dbReference type="ChEBI" id="CHEBI:59789"/>
    </ligand>
</feature>
<feature type="binding site" evidence="1">
    <location>
        <position position="62"/>
    </location>
    <ligand>
        <name>S-adenosyl-L-methionine</name>
        <dbReference type="ChEBI" id="CHEBI:59789"/>
    </ligand>
</feature>
<feature type="binding site" evidence="1">
    <location>
        <position position="92"/>
    </location>
    <ligand>
        <name>S-adenosyl-L-methionine</name>
        <dbReference type="ChEBI" id="CHEBI:59789"/>
    </ligand>
</feature>
<feature type="binding site" evidence="1">
    <location>
        <position position="108"/>
    </location>
    <ligand>
        <name>S-adenosyl-L-methionine</name>
        <dbReference type="ChEBI" id="CHEBI:59789"/>
    </ligand>
</feature>
<feature type="binding site" evidence="1">
    <location>
        <position position="133"/>
    </location>
    <ligand>
        <name>S-adenosyl-L-methionine</name>
        <dbReference type="ChEBI" id="CHEBI:59789"/>
    </ligand>
</feature>
<name>RLME_BURO1</name>
<sequence length="220" mass="24787">MAKNRFNQHWLHDHINDPYVKMAQREGYRARAAYKLKEIDEQDKLIRPGQVIVDLGATPGSWSQYARNKLAQGKKRDAEREGGIDGTIVALDILPMEPIADVHFLQGDFREDDVLHQLEEVLEGRAVDLVISDMAPNLSGVASADAARIEHLCDLALEFAQNHLKPDGALLVKCFHGSGYSQIVEKFKQQFKVVAPRKPKASRDKSSETFILGRQLKHPR</sequence>
<keyword id="KW-0963">Cytoplasm</keyword>
<keyword id="KW-0489">Methyltransferase</keyword>
<keyword id="KW-0698">rRNA processing</keyword>
<keyword id="KW-0949">S-adenosyl-L-methionine</keyword>
<keyword id="KW-0808">Transferase</keyword>
<evidence type="ECO:0000255" key="1">
    <source>
        <dbReference type="HAMAP-Rule" id="MF_01547"/>
    </source>
</evidence>
<evidence type="ECO:0000256" key="2">
    <source>
        <dbReference type="SAM" id="MobiDB-lite"/>
    </source>
</evidence>
<accession>Q1BXD0</accession>
<organism>
    <name type="scientific">Burkholderia orbicola (strain AU 1054)</name>
    <dbReference type="NCBI Taxonomy" id="331271"/>
    <lineage>
        <taxon>Bacteria</taxon>
        <taxon>Pseudomonadati</taxon>
        <taxon>Pseudomonadota</taxon>
        <taxon>Betaproteobacteria</taxon>
        <taxon>Burkholderiales</taxon>
        <taxon>Burkholderiaceae</taxon>
        <taxon>Burkholderia</taxon>
        <taxon>Burkholderia cepacia complex</taxon>
        <taxon>Burkholderia orbicola</taxon>
    </lineage>
</organism>
<dbReference type="EC" id="2.1.1.166" evidence="1"/>
<dbReference type="EMBL" id="CP000378">
    <property type="protein sequence ID" value="ABF75725.1"/>
    <property type="molecule type" value="Genomic_DNA"/>
</dbReference>
<dbReference type="SMR" id="Q1BXD0"/>
<dbReference type="HOGENOM" id="CLU_009422_4_1_4"/>
<dbReference type="GO" id="GO:0005737">
    <property type="term" value="C:cytoplasm"/>
    <property type="evidence" value="ECO:0007669"/>
    <property type="project" value="UniProtKB-SubCell"/>
</dbReference>
<dbReference type="GO" id="GO:0008650">
    <property type="term" value="F:rRNA (uridine-2'-O-)-methyltransferase activity"/>
    <property type="evidence" value="ECO:0007669"/>
    <property type="project" value="UniProtKB-UniRule"/>
</dbReference>
<dbReference type="FunFam" id="3.40.50.150:FF:000005">
    <property type="entry name" value="Ribosomal RNA large subunit methyltransferase E"/>
    <property type="match status" value="1"/>
</dbReference>
<dbReference type="Gene3D" id="3.40.50.150">
    <property type="entry name" value="Vaccinia Virus protein VP39"/>
    <property type="match status" value="1"/>
</dbReference>
<dbReference type="HAMAP" id="MF_01547">
    <property type="entry name" value="RNA_methyltr_E"/>
    <property type="match status" value="1"/>
</dbReference>
<dbReference type="InterPro" id="IPR050082">
    <property type="entry name" value="RNA_methyltr_RlmE"/>
</dbReference>
<dbReference type="InterPro" id="IPR002877">
    <property type="entry name" value="RNA_MeTrfase_FtsJ_dom"/>
</dbReference>
<dbReference type="InterPro" id="IPR015507">
    <property type="entry name" value="rRNA-MeTfrase_E"/>
</dbReference>
<dbReference type="InterPro" id="IPR029063">
    <property type="entry name" value="SAM-dependent_MTases_sf"/>
</dbReference>
<dbReference type="PANTHER" id="PTHR10920">
    <property type="entry name" value="RIBOSOMAL RNA METHYLTRANSFERASE"/>
    <property type="match status" value="1"/>
</dbReference>
<dbReference type="PANTHER" id="PTHR10920:SF18">
    <property type="entry name" value="RRNA METHYLTRANSFERASE 2, MITOCHONDRIAL"/>
    <property type="match status" value="1"/>
</dbReference>
<dbReference type="Pfam" id="PF01728">
    <property type="entry name" value="FtsJ"/>
    <property type="match status" value="1"/>
</dbReference>
<dbReference type="PIRSF" id="PIRSF005461">
    <property type="entry name" value="23S_rRNA_mtase"/>
    <property type="match status" value="1"/>
</dbReference>
<dbReference type="SUPFAM" id="SSF53335">
    <property type="entry name" value="S-adenosyl-L-methionine-dependent methyltransferases"/>
    <property type="match status" value="1"/>
</dbReference>
<reference key="1">
    <citation type="submission" date="2006-05" db="EMBL/GenBank/DDBJ databases">
        <title>Complete sequence of chromosome 1 of Burkholderia cenocepacia AU 1054.</title>
        <authorList>
            <consortium name="US DOE Joint Genome Institute"/>
            <person name="Copeland A."/>
            <person name="Lucas S."/>
            <person name="Lapidus A."/>
            <person name="Barry K."/>
            <person name="Detter J.C."/>
            <person name="Glavina del Rio T."/>
            <person name="Hammon N."/>
            <person name="Israni S."/>
            <person name="Dalin E."/>
            <person name="Tice H."/>
            <person name="Pitluck S."/>
            <person name="Chain P."/>
            <person name="Malfatti S."/>
            <person name="Shin M."/>
            <person name="Vergez L."/>
            <person name="Schmutz J."/>
            <person name="Larimer F."/>
            <person name="Land M."/>
            <person name="Hauser L."/>
            <person name="Kyrpides N."/>
            <person name="Lykidis A."/>
            <person name="LiPuma J.J."/>
            <person name="Konstantinidis K."/>
            <person name="Tiedje J.M."/>
            <person name="Richardson P."/>
        </authorList>
    </citation>
    <scope>NUCLEOTIDE SEQUENCE [LARGE SCALE GENOMIC DNA]</scope>
    <source>
        <strain>AU 1054</strain>
    </source>
</reference>
<comment type="function">
    <text evidence="1">Specifically methylates the uridine in position 2552 of 23S rRNA at the 2'-O position of the ribose in the fully assembled 50S ribosomal subunit.</text>
</comment>
<comment type="catalytic activity">
    <reaction evidence="1">
        <text>uridine(2552) in 23S rRNA + S-adenosyl-L-methionine = 2'-O-methyluridine(2552) in 23S rRNA + S-adenosyl-L-homocysteine + H(+)</text>
        <dbReference type="Rhea" id="RHEA:42720"/>
        <dbReference type="Rhea" id="RHEA-COMP:10202"/>
        <dbReference type="Rhea" id="RHEA-COMP:10203"/>
        <dbReference type="ChEBI" id="CHEBI:15378"/>
        <dbReference type="ChEBI" id="CHEBI:57856"/>
        <dbReference type="ChEBI" id="CHEBI:59789"/>
        <dbReference type="ChEBI" id="CHEBI:65315"/>
        <dbReference type="ChEBI" id="CHEBI:74478"/>
        <dbReference type="EC" id="2.1.1.166"/>
    </reaction>
</comment>
<comment type="subcellular location">
    <subcellularLocation>
        <location evidence="1">Cytoplasm</location>
    </subcellularLocation>
</comment>
<comment type="similarity">
    <text evidence="1">Belongs to the class I-like SAM-binding methyltransferase superfamily. RNA methyltransferase RlmE family.</text>
</comment>